<dbReference type="EMBL" id="AL591983">
    <property type="protein sequence ID" value="CAD00709.1"/>
    <property type="molecule type" value="Genomic_DNA"/>
</dbReference>
<dbReference type="PIR" id="AG1403">
    <property type="entry name" value="AG1403"/>
</dbReference>
<dbReference type="RefSeq" id="NP_466154.1">
    <property type="nucleotide sequence ID" value="NC_003210.1"/>
</dbReference>
<dbReference type="RefSeq" id="WP_003727695.1">
    <property type="nucleotide sequence ID" value="NZ_CP149495.1"/>
</dbReference>
<dbReference type="PDB" id="7NHN">
    <property type="method" value="EM"/>
    <property type="resolution" value="2.90 A"/>
    <property type="chains" value="I=1-207"/>
</dbReference>
<dbReference type="PDB" id="8A57">
    <property type="method" value="EM"/>
    <property type="resolution" value="2.30 A"/>
    <property type="chains" value="I=1-207"/>
</dbReference>
<dbReference type="PDB" id="8A5I">
    <property type="method" value="EM"/>
    <property type="resolution" value="2.30 A"/>
    <property type="chains" value="I=1-207"/>
</dbReference>
<dbReference type="PDB" id="8A63">
    <property type="method" value="EM"/>
    <property type="resolution" value="3.10 A"/>
    <property type="chains" value="I=1-207"/>
</dbReference>
<dbReference type="PDBsum" id="7NHN"/>
<dbReference type="PDBsum" id="8A57"/>
<dbReference type="PDBsum" id="8A5I"/>
<dbReference type="PDBsum" id="8A63"/>
<dbReference type="EMDB" id="EMD-12334"/>
<dbReference type="EMDB" id="EMD-15161"/>
<dbReference type="EMDB" id="EMD-15175"/>
<dbReference type="EMDB" id="EMD-15204"/>
<dbReference type="SMR" id="P61055"/>
<dbReference type="STRING" id="169963.gene:17595349"/>
<dbReference type="PaxDb" id="169963-lmo2631"/>
<dbReference type="EnsemblBacteria" id="CAD00709">
    <property type="protein sequence ID" value="CAD00709"/>
    <property type="gene ID" value="CAD00709"/>
</dbReference>
<dbReference type="GeneID" id="93240512"/>
<dbReference type="GeneID" id="987182"/>
<dbReference type="KEGG" id="lmo:lmo2631"/>
<dbReference type="PATRIC" id="fig|169963.11.peg.2695"/>
<dbReference type="eggNOG" id="COG0088">
    <property type="taxonomic scope" value="Bacteria"/>
</dbReference>
<dbReference type="HOGENOM" id="CLU_041575_5_2_9"/>
<dbReference type="OrthoDB" id="9803201at2"/>
<dbReference type="PhylomeDB" id="P61055"/>
<dbReference type="BioCyc" id="LMON169963:LMO2631-MONOMER"/>
<dbReference type="Proteomes" id="UP000000817">
    <property type="component" value="Chromosome"/>
</dbReference>
<dbReference type="GO" id="GO:1990904">
    <property type="term" value="C:ribonucleoprotein complex"/>
    <property type="evidence" value="ECO:0007669"/>
    <property type="project" value="UniProtKB-KW"/>
</dbReference>
<dbReference type="GO" id="GO:0005840">
    <property type="term" value="C:ribosome"/>
    <property type="evidence" value="ECO:0007669"/>
    <property type="project" value="UniProtKB-KW"/>
</dbReference>
<dbReference type="GO" id="GO:0019843">
    <property type="term" value="F:rRNA binding"/>
    <property type="evidence" value="ECO:0007669"/>
    <property type="project" value="UniProtKB-UniRule"/>
</dbReference>
<dbReference type="GO" id="GO:0003735">
    <property type="term" value="F:structural constituent of ribosome"/>
    <property type="evidence" value="ECO:0000318"/>
    <property type="project" value="GO_Central"/>
</dbReference>
<dbReference type="GO" id="GO:0006412">
    <property type="term" value="P:translation"/>
    <property type="evidence" value="ECO:0007669"/>
    <property type="project" value="UniProtKB-UniRule"/>
</dbReference>
<dbReference type="FunFam" id="3.40.1370.10:FF:000003">
    <property type="entry name" value="50S ribosomal protein L4"/>
    <property type="match status" value="1"/>
</dbReference>
<dbReference type="Gene3D" id="3.40.1370.10">
    <property type="match status" value="1"/>
</dbReference>
<dbReference type="HAMAP" id="MF_01328_B">
    <property type="entry name" value="Ribosomal_uL4_B"/>
    <property type="match status" value="1"/>
</dbReference>
<dbReference type="InterPro" id="IPR002136">
    <property type="entry name" value="Ribosomal_uL4"/>
</dbReference>
<dbReference type="InterPro" id="IPR013005">
    <property type="entry name" value="Ribosomal_uL4-like"/>
</dbReference>
<dbReference type="InterPro" id="IPR023574">
    <property type="entry name" value="Ribosomal_uL4_dom_sf"/>
</dbReference>
<dbReference type="NCBIfam" id="TIGR03953">
    <property type="entry name" value="rplD_bact"/>
    <property type="match status" value="1"/>
</dbReference>
<dbReference type="PANTHER" id="PTHR10746">
    <property type="entry name" value="50S RIBOSOMAL PROTEIN L4"/>
    <property type="match status" value="1"/>
</dbReference>
<dbReference type="PANTHER" id="PTHR10746:SF6">
    <property type="entry name" value="LARGE RIBOSOMAL SUBUNIT PROTEIN UL4M"/>
    <property type="match status" value="1"/>
</dbReference>
<dbReference type="Pfam" id="PF00573">
    <property type="entry name" value="Ribosomal_L4"/>
    <property type="match status" value="1"/>
</dbReference>
<dbReference type="SUPFAM" id="SSF52166">
    <property type="entry name" value="Ribosomal protein L4"/>
    <property type="match status" value="1"/>
</dbReference>
<accession>P61055</accession>
<accession>Q927K8</accession>
<organism>
    <name type="scientific">Listeria monocytogenes serovar 1/2a (strain ATCC BAA-679 / EGD-e)</name>
    <dbReference type="NCBI Taxonomy" id="169963"/>
    <lineage>
        <taxon>Bacteria</taxon>
        <taxon>Bacillati</taxon>
        <taxon>Bacillota</taxon>
        <taxon>Bacilli</taxon>
        <taxon>Bacillales</taxon>
        <taxon>Listeriaceae</taxon>
        <taxon>Listeria</taxon>
    </lineage>
</organism>
<evidence type="ECO:0000255" key="1">
    <source>
        <dbReference type="HAMAP-Rule" id="MF_01328"/>
    </source>
</evidence>
<evidence type="ECO:0000256" key="2">
    <source>
        <dbReference type="SAM" id="MobiDB-lite"/>
    </source>
</evidence>
<evidence type="ECO:0000305" key="3"/>
<evidence type="ECO:0007829" key="4">
    <source>
        <dbReference type="PDB" id="8A57"/>
    </source>
</evidence>
<comment type="function">
    <text evidence="1">One of the primary rRNA binding proteins, this protein initially binds near the 5'-end of the 23S rRNA. It is important during the early stages of 50S assembly. It makes multiple contacts with different domains of the 23S rRNA in the assembled 50S subunit and ribosome.</text>
</comment>
<comment type="function">
    <text evidence="1">Forms part of the polypeptide exit tunnel.</text>
</comment>
<comment type="subunit">
    <text evidence="1">Part of the 50S ribosomal subunit.</text>
</comment>
<comment type="similarity">
    <text evidence="1">Belongs to the universal ribosomal protein uL4 family.</text>
</comment>
<sequence>MPKLSLLKQDGTNAGEITLNDTVFGIEPNEKVVVDVILSQRASLRQGTHKVKNRSEVRGGGRKPWRQKGTGRARQGSIRSPQWRGGGVVFGPTPRSYAYKLPKKVRRLAIKSILSSKVNEEKLVVLEGLTFDAPKTKEFAAFLKNISVDTKALIVVAGESENVELSARNLQGITVIPAESISVLEVAKHDKLIITKAAVEKVEEVLA</sequence>
<name>RL4_LISMO</name>
<proteinExistence type="evidence at protein level"/>
<feature type="chain" id="PRO_0000129234" description="Large ribosomal subunit protein uL4">
    <location>
        <begin position="1"/>
        <end position="207"/>
    </location>
</feature>
<feature type="region of interest" description="Disordered" evidence="2">
    <location>
        <begin position="47"/>
        <end position="78"/>
    </location>
</feature>
<feature type="compositionally biased region" description="Basic residues" evidence="2">
    <location>
        <begin position="60"/>
        <end position="71"/>
    </location>
</feature>
<feature type="strand" evidence="4">
    <location>
        <begin position="5"/>
        <end position="7"/>
    </location>
</feature>
<feature type="strand" evidence="4">
    <location>
        <begin position="11"/>
        <end position="16"/>
    </location>
</feature>
<feature type="turn" evidence="4">
    <location>
        <begin position="21"/>
        <end position="23"/>
    </location>
</feature>
<feature type="strand" evidence="4">
    <location>
        <begin position="24"/>
        <end position="26"/>
    </location>
</feature>
<feature type="helix" evidence="4">
    <location>
        <begin position="30"/>
        <end position="43"/>
    </location>
</feature>
<feature type="turn" evidence="4">
    <location>
        <begin position="54"/>
        <end position="56"/>
    </location>
</feature>
<feature type="strand" evidence="4">
    <location>
        <begin position="67"/>
        <end position="72"/>
    </location>
</feature>
<feature type="helix" evidence="4">
    <location>
        <begin position="103"/>
        <end position="119"/>
    </location>
</feature>
<feature type="strand" evidence="4">
    <location>
        <begin position="123"/>
        <end position="127"/>
    </location>
</feature>
<feature type="helix" evidence="4">
    <location>
        <begin position="136"/>
        <end position="146"/>
    </location>
</feature>
<feature type="strand" evidence="4">
    <location>
        <begin position="152"/>
        <end position="156"/>
    </location>
</feature>
<feature type="helix" evidence="4">
    <location>
        <begin position="163"/>
        <end position="166"/>
    </location>
</feature>
<feature type="turn" evidence="4">
    <location>
        <begin position="167"/>
        <end position="169"/>
    </location>
</feature>
<feature type="strand" evidence="4">
    <location>
        <begin position="174"/>
        <end position="177"/>
    </location>
</feature>
<feature type="helix" evidence="4">
    <location>
        <begin position="178"/>
        <end position="180"/>
    </location>
</feature>
<feature type="helix" evidence="4">
    <location>
        <begin position="183"/>
        <end position="187"/>
    </location>
</feature>
<feature type="strand" evidence="4">
    <location>
        <begin position="190"/>
        <end position="195"/>
    </location>
</feature>
<feature type="helix" evidence="4">
    <location>
        <begin position="196"/>
        <end position="205"/>
    </location>
</feature>
<keyword id="KW-0002">3D-structure</keyword>
<keyword id="KW-1185">Reference proteome</keyword>
<keyword id="KW-0687">Ribonucleoprotein</keyword>
<keyword id="KW-0689">Ribosomal protein</keyword>
<keyword id="KW-0694">RNA-binding</keyword>
<keyword id="KW-0699">rRNA-binding</keyword>
<reference key="1">
    <citation type="journal article" date="2001" name="Science">
        <title>Comparative genomics of Listeria species.</title>
        <authorList>
            <person name="Glaser P."/>
            <person name="Frangeul L."/>
            <person name="Buchrieser C."/>
            <person name="Rusniok C."/>
            <person name="Amend A."/>
            <person name="Baquero F."/>
            <person name="Berche P."/>
            <person name="Bloecker H."/>
            <person name="Brandt P."/>
            <person name="Chakraborty T."/>
            <person name="Charbit A."/>
            <person name="Chetouani F."/>
            <person name="Couve E."/>
            <person name="de Daruvar A."/>
            <person name="Dehoux P."/>
            <person name="Domann E."/>
            <person name="Dominguez-Bernal G."/>
            <person name="Duchaud E."/>
            <person name="Durant L."/>
            <person name="Dussurget O."/>
            <person name="Entian K.-D."/>
            <person name="Fsihi H."/>
            <person name="Garcia-del Portillo F."/>
            <person name="Garrido P."/>
            <person name="Gautier L."/>
            <person name="Goebel W."/>
            <person name="Gomez-Lopez N."/>
            <person name="Hain T."/>
            <person name="Hauf J."/>
            <person name="Jackson D."/>
            <person name="Jones L.-M."/>
            <person name="Kaerst U."/>
            <person name="Kreft J."/>
            <person name="Kuhn M."/>
            <person name="Kunst F."/>
            <person name="Kurapkat G."/>
            <person name="Madueno E."/>
            <person name="Maitournam A."/>
            <person name="Mata Vicente J."/>
            <person name="Ng E."/>
            <person name="Nedjari H."/>
            <person name="Nordsiek G."/>
            <person name="Novella S."/>
            <person name="de Pablos B."/>
            <person name="Perez-Diaz J.-C."/>
            <person name="Purcell R."/>
            <person name="Remmel B."/>
            <person name="Rose M."/>
            <person name="Schlueter T."/>
            <person name="Simoes N."/>
            <person name="Tierrez A."/>
            <person name="Vazquez-Boland J.-A."/>
            <person name="Voss H."/>
            <person name="Wehland J."/>
            <person name="Cossart P."/>
        </authorList>
    </citation>
    <scope>NUCLEOTIDE SEQUENCE [LARGE SCALE GENOMIC DNA]</scope>
    <source>
        <strain>ATCC BAA-679 / EGD-e</strain>
    </source>
</reference>
<protein>
    <recommendedName>
        <fullName evidence="1">Large ribosomal subunit protein uL4</fullName>
    </recommendedName>
    <alternativeName>
        <fullName evidence="3">50S ribosomal protein L4</fullName>
    </alternativeName>
</protein>
<gene>
    <name evidence="1" type="primary">rplD</name>
    <name type="ordered locus">lmo2631</name>
</gene>